<protein>
    <recommendedName>
        <fullName evidence="1">Type III pantothenate kinase</fullName>
        <ecNumber evidence="1">2.7.1.33</ecNumber>
    </recommendedName>
    <alternativeName>
        <fullName evidence="1">PanK-III</fullName>
    </alternativeName>
    <alternativeName>
        <fullName evidence="1">Pantothenic acid kinase</fullName>
    </alternativeName>
</protein>
<reference key="1">
    <citation type="submission" date="2007-10" db="EMBL/GenBank/DDBJ databases">
        <title>Complete sequence of Desulfococcus oleovorans Hxd3.</title>
        <authorList>
            <consortium name="US DOE Joint Genome Institute"/>
            <person name="Copeland A."/>
            <person name="Lucas S."/>
            <person name="Lapidus A."/>
            <person name="Barry K."/>
            <person name="Glavina del Rio T."/>
            <person name="Dalin E."/>
            <person name="Tice H."/>
            <person name="Pitluck S."/>
            <person name="Kiss H."/>
            <person name="Brettin T."/>
            <person name="Bruce D."/>
            <person name="Detter J.C."/>
            <person name="Han C."/>
            <person name="Schmutz J."/>
            <person name="Larimer F."/>
            <person name="Land M."/>
            <person name="Hauser L."/>
            <person name="Kyrpides N."/>
            <person name="Kim E."/>
            <person name="Wawrik B."/>
            <person name="Richardson P."/>
        </authorList>
    </citation>
    <scope>NUCLEOTIDE SEQUENCE [LARGE SCALE GENOMIC DNA]</scope>
    <source>
        <strain>DSM 6200 / JCM 39069 / Hxd3</strain>
    </source>
</reference>
<organism>
    <name type="scientific">Desulfosudis oleivorans (strain DSM 6200 / JCM 39069 / Hxd3)</name>
    <name type="common">Desulfococcus oleovorans</name>
    <dbReference type="NCBI Taxonomy" id="96561"/>
    <lineage>
        <taxon>Bacteria</taxon>
        <taxon>Pseudomonadati</taxon>
        <taxon>Thermodesulfobacteriota</taxon>
        <taxon>Desulfobacteria</taxon>
        <taxon>Desulfobacterales</taxon>
        <taxon>Desulfosudaceae</taxon>
        <taxon>Desulfosudis</taxon>
    </lineage>
</organism>
<keyword id="KW-0067">ATP-binding</keyword>
<keyword id="KW-0173">Coenzyme A biosynthesis</keyword>
<keyword id="KW-0963">Cytoplasm</keyword>
<keyword id="KW-0418">Kinase</keyword>
<keyword id="KW-0479">Metal-binding</keyword>
<keyword id="KW-0547">Nucleotide-binding</keyword>
<keyword id="KW-0630">Potassium</keyword>
<keyword id="KW-1185">Reference proteome</keyword>
<keyword id="KW-0808">Transferase</keyword>
<evidence type="ECO:0000255" key="1">
    <source>
        <dbReference type="HAMAP-Rule" id="MF_01274"/>
    </source>
</evidence>
<dbReference type="EC" id="2.7.1.33" evidence="1"/>
<dbReference type="EMBL" id="CP000859">
    <property type="protein sequence ID" value="ABW68849.1"/>
    <property type="molecule type" value="Genomic_DNA"/>
</dbReference>
<dbReference type="RefSeq" id="WP_012176460.1">
    <property type="nucleotide sequence ID" value="NC_009943.1"/>
</dbReference>
<dbReference type="SMR" id="A8ZZH7"/>
<dbReference type="STRING" id="96561.Dole_3046"/>
<dbReference type="KEGG" id="dol:Dole_3046"/>
<dbReference type="eggNOG" id="COG1521">
    <property type="taxonomic scope" value="Bacteria"/>
</dbReference>
<dbReference type="HOGENOM" id="CLU_066627_1_0_7"/>
<dbReference type="OrthoDB" id="9804707at2"/>
<dbReference type="UniPathway" id="UPA00241">
    <property type="reaction ID" value="UER00352"/>
</dbReference>
<dbReference type="Proteomes" id="UP000008561">
    <property type="component" value="Chromosome"/>
</dbReference>
<dbReference type="GO" id="GO:0005737">
    <property type="term" value="C:cytoplasm"/>
    <property type="evidence" value="ECO:0007669"/>
    <property type="project" value="UniProtKB-SubCell"/>
</dbReference>
<dbReference type="GO" id="GO:0005524">
    <property type="term" value="F:ATP binding"/>
    <property type="evidence" value="ECO:0007669"/>
    <property type="project" value="UniProtKB-UniRule"/>
</dbReference>
<dbReference type="GO" id="GO:0046872">
    <property type="term" value="F:metal ion binding"/>
    <property type="evidence" value="ECO:0007669"/>
    <property type="project" value="UniProtKB-KW"/>
</dbReference>
<dbReference type="GO" id="GO:0004594">
    <property type="term" value="F:pantothenate kinase activity"/>
    <property type="evidence" value="ECO:0007669"/>
    <property type="project" value="UniProtKB-UniRule"/>
</dbReference>
<dbReference type="GO" id="GO:0015937">
    <property type="term" value="P:coenzyme A biosynthetic process"/>
    <property type="evidence" value="ECO:0007669"/>
    <property type="project" value="UniProtKB-UniRule"/>
</dbReference>
<dbReference type="CDD" id="cd24015">
    <property type="entry name" value="ASKHA_NBD_PanK-III"/>
    <property type="match status" value="1"/>
</dbReference>
<dbReference type="Gene3D" id="3.30.420.40">
    <property type="match status" value="2"/>
</dbReference>
<dbReference type="HAMAP" id="MF_01274">
    <property type="entry name" value="Pantothen_kinase_3"/>
    <property type="match status" value="1"/>
</dbReference>
<dbReference type="InterPro" id="IPR043129">
    <property type="entry name" value="ATPase_NBD"/>
</dbReference>
<dbReference type="InterPro" id="IPR004619">
    <property type="entry name" value="Type_III_PanK"/>
</dbReference>
<dbReference type="NCBIfam" id="TIGR00671">
    <property type="entry name" value="baf"/>
    <property type="match status" value="1"/>
</dbReference>
<dbReference type="NCBIfam" id="NF009848">
    <property type="entry name" value="PRK13318.1-6"/>
    <property type="match status" value="1"/>
</dbReference>
<dbReference type="NCBIfam" id="NF009855">
    <property type="entry name" value="PRK13321.1"/>
    <property type="match status" value="1"/>
</dbReference>
<dbReference type="PANTHER" id="PTHR34265">
    <property type="entry name" value="TYPE III PANTOTHENATE KINASE"/>
    <property type="match status" value="1"/>
</dbReference>
<dbReference type="PANTHER" id="PTHR34265:SF1">
    <property type="entry name" value="TYPE III PANTOTHENATE KINASE"/>
    <property type="match status" value="1"/>
</dbReference>
<dbReference type="Pfam" id="PF03309">
    <property type="entry name" value="Pan_kinase"/>
    <property type="match status" value="1"/>
</dbReference>
<dbReference type="SUPFAM" id="SSF53067">
    <property type="entry name" value="Actin-like ATPase domain"/>
    <property type="match status" value="2"/>
</dbReference>
<sequence length="255" mass="26973">MLLVIDIGNTNTVFGIFEDQKLVRDWRIRTKRNTTEDELNVLLTGLFTGSSVALADISRAVIASVVPPVERIYSAFCKKYLRCTPQWVSPANCAGITIRYANPQEVGADRIVNAVGAHAKYQTDLIVVDFGTATTFDLVSADGAYEGGVIAPGIGISADALFSHASKLPRVDLMTVPETVVGKDTAGSIKSGIIFGYAGLVDGIVSRMITERGRPHKVIATGGLAPLIAGVSATIEAVEPNLTLEGLRIIGSSAE</sequence>
<gene>
    <name evidence="1" type="primary">coaX</name>
    <name type="ordered locus">Dole_3046</name>
</gene>
<feature type="chain" id="PRO_1000140239" description="Type III pantothenate kinase">
    <location>
        <begin position="1"/>
        <end position="255"/>
    </location>
</feature>
<feature type="active site" description="Proton acceptor" evidence="1">
    <location>
        <position position="109"/>
    </location>
</feature>
<feature type="binding site" evidence="1">
    <location>
        <begin position="6"/>
        <end position="13"/>
    </location>
    <ligand>
        <name>ATP</name>
        <dbReference type="ChEBI" id="CHEBI:30616"/>
    </ligand>
</feature>
<feature type="binding site" evidence="1">
    <location>
        <position position="100"/>
    </location>
    <ligand>
        <name>substrate</name>
    </ligand>
</feature>
<feature type="binding site" evidence="1">
    <location>
        <begin position="107"/>
        <end position="110"/>
    </location>
    <ligand>
        <name>substrate</name>
    </ligand>
</feature>
<feature type="binding site" evidence="1">
    <location>
        <position position="129"/>
    </location>
    <ligand>
        <name>K(+)</name>
        <dbReference type="ChEBI" id="CHEBI:29103"/>
    </ligand>
</feature>
<feature type="binding site" evidence="1">
    <location>
        <position position="132"/>
    </location>
    <ligand>
        <name>ATP</name>
        <dbReference type="ChEBI" id="CHEBI:30616"/>
    </ligand>
</feature>
<feature type="binding site" evidence="1">
    <location>
        <position position="185"/>
    </location>
    <ligand>
        <name>substrate</name>
    </ligand>
</feature>
<proteinExistence type="inferred from homology"/>
<comment type="function">
    <text evidence="1">Catalyzes the phosphorylation of pantothenate (Pan), the first step in CoA biosynthesis.</text>
</comment>
<comment type="catalytic activity">
    <reaction evidence="1">
        <text>(R)-pantothenate + ATP = (R)-4'-phosphopantothenate + ADP + H(+)</text>
        <dbReference type="Rhea" id="RHEA:16373"/>
        <dbReference type="ChEBI" id="CHEBI:10986"/>
        <dbReference type="ChEBI" id="CHEBI:15378"/>
        <dbReference type="ChEBI" id="CHEBI:29032"/>
        <dbReference type="ChEBI" id="CHEBI:30616"/>
        <dbReference type="ChEBI" id="CHEBI:456216"/>
        <dbReference type="EC" id="2.7.1.33"/>
    </reaction>
</comment>
<comment type="cofactor">
    <cofactor evidence="1">
        <name>NH4(+)</name>
        <dbReference type="ChEBI" id="CHEBI:28938"/>
    </cofactor>
    <cofactor evidence="1">
        <name>K(+)</name>
        <dbReference type="ChEBI" id="CHEBI:29103"/>
    </cofactor>
    <text evidence="1">A monovalent cation. Ammonium or potassium.</text>
</comment>
<comment type="pathway">
    <text evidence="1">Cofactor biosynthesis; coenzyme A biosynthesis; CoA from (R)-pantothenate: step 1/5.</text>
</comment>
<comment type="subunit">
    <text evidence="1">Homodimer.</text>
</comment>
<comment type="subcellular location">
    <subcellularLocation>
        <location evidence="1">Cytoplasm</location>
    </subcellularLocation>
</comment>
<comment type="similarity">
    <text evidence="1">Belongs to the type III pantothenate kinase family.</text>
</comment>
<accession>A8ZZH7</accession>
<name>COAX_DESOH</name>